<accession>A1RIB0</accession>
<gene>
    <name evidence="1" type="primary">truA</name>
    <name type="ordered locus">Sputw3181_1567</name>
</gene>
<dbReference type="EC" id="5.4.99.12" evidence="1"/>
<dbReference type="EMBL" id="CP000503">
    <property type="protein sequence ID" value="ABM24405.1"/>
    <property type="molecule type" value="Genomic_DNA"/>
</dbReference>
<dbReference type="RefSeq" id="WP_011788905.1">
    <property type="nucleotide sequence ID" value="NC_008750.1"/>
</dbReference>
<dbReference type="SMR" id="A1RIB0"/>
<dbReference type="KEGG" id="shw:Sputw3181_1567"/>
<dbReference type="HOGENOM" id="CLU_014673_0_2_6"/>
<dbReference type="Proteomes" id="UP000002597">
    <property type="component" value="Chromosome"/>
</dbReference>
<dbReference type="GO" id="GO:0003723">
    <property type="term" value="F:RNA binding"/>
    <property type="evidence" value="ECO:0007669"/>
    <property type="project" value="InterPro"/>
</dbReference>
<dbReference type="GO" id="GO:0160147">
    <property type="term" value="F:tRNA pseudouridine(38-40) synthase activity"/>
    <property type="evidence" value="ECO:0007669"/>
    <property type="project" value="UniProtKB-EC"/>
</dbReference>
<dbReference type="GO" id="GO:0031119">
    <property type="term" value="P:tRNA pseudouridine synthesis"/>
    <property type="evidence" value="ECO:0007669"/>
    <property type="project" value="UniProtKB-UniRule"/>
</dbReference>
<dbReference type="CDD" id="cd02570">
    <property type="entry name" value="PseudoU_synth_EcTruA"/>
    <property type="match status" value="1"/>
</dbReference>
<dbReference type="FunFam" id="3.30.70.580:FF:000001">
    <property type="entry name" value="tRNA pseudouridine synthase A"/>
    <property type="match status" value="1"/>
</dbReference>
<dbReference type="FunFam" id="3.30.70.660:FF:000001">
    <property type="entry name" value="tRNA pseudouridine synthase A"/>
    <property type="match status" value="1"/>
</dbReference>
<dbReference type="Gene3D" id="3.30.70.660">
    <property type="entry name" value="Pseudouridine synthase I, catalytic domain, C-terminal subdomain"/>
    <property type="match status" value="1"/>
</dbReference>
<dbReference type="Gene3D" id="3.30.70.580">
    <property type="entry name" value="Pseudouridine synthase I, catalytic domain, N-terminal subdomain"/>
    <property type="match status" value="1"/>
</dbReference>
<dbReference type="HAMAP" id="MF_00171">
    <property type="entry name" value="TruA"/>
    <property type="match status" value="1"/>
</dbReference>
<dbReference type="InterPro" id="IPR020103">
    <property type="entry name" value="PsdUridine_synth_cat_dom_sf"/>
</dbReference>
<dbReference type="InterPro" id="IPR001406">
    <property type="entry name" value="PsdUridine_synth_TruA"/>
</dbReference>
<dbReference type="InterPro" id="IPR020097">
    <property type="entry name" value="PsdUridine_synth_TruA_a/b_dom"/>
</dbReference>
<dbReference type="InterPro" id="IPR020095">
    <property type="entry name" value="PsdUridine_synth_TruA_C"/>
</dbReference>
<dbReference type="InterPro" id="IPR020094">
    <property type="entry name" value="TruA/RsuA/RluB/E/F_N"/>
</dbReference>
<dbReference type="NCBIfam" id="TIGR00071">
    <property type="entry name" value="hisT_truA"/>
    <property type="match status" value="1"/>
</dbReference>
<dbReference type="PANTHER" id="PTHR11142">
    <property type="entry name" value="PSEUDOURIDYLATE SYNTHASE"/>
    <property type="match status" value="1"/>
</dbReference>
<dbReference type="PANTHER" id="PTHR11142:SF0">
    <property type="entry name" value="TRNA PSEUDOURIDINE SYNTHASE-LIKE 1"/>
    <property type="match status" value="1"/>
</dbReference>
<dbReference type="Pfam" id="PF01416">
    <property type="entry name" value="PseudoU_synth_1"/>
    <property type="match status" value="2"/>
</dbReference>
<dbReference type="PIRSF" id="PIRSF001430">
    <property type="entry name" value="tRNA_psdUrid_synth"/>
    <property type="match status" value="1"/>
</dbReference>
<dbReference type="SUPFAM" id="SSF55120">
    <property type="entry name" value="Pseudouridine synthase"/>
    <property type="match status" value="1"/>
</dbReference>
<evidence type="ECO:0000255" key="1">
    <source>
        <dbReference type="HAMAP-Rule" id="MF_00171"/>
    </source>
</evidence>
<protein>
    <recommendedName>
        <fullName evidence="1">tRNA pseudouridine synthase A</fullName>
        <ecNumber evidence="1">5.4.99.12</ecNumber>
    </recommendedName>
    <alternativeName>
        <fullName evidence="1">tRNA pseudouridine(38-40) synthase</fullName>
    </alternativeName>
    <alternativeName>
        <fullName evidence="1">tRNA pseudouridylate synthase I</fullName>
    </alternativeName>
    <alternativeName>
        <fullName evidence="1">tRNA-uridine isomerase I</fullName>
    </alternativeName>
</protein>
<organism>
    <name type="scientific">Shewanella sp. (strain W3-18-1)</name>
    <dbReference type="NCBI Taxonomy" id="351745"/>
    <lineage>
        <taxon>Bacteria</taxon>
        <taxon>Pseudomonadati</taxon>
        <taxon>Pseudomonadota</taxon>
        <taxon>Gammaproteobacteria</taxon>
        <taxon>Alteromonadales</taxon>
        <taxon>Shewanellaceae</taxon>
        <taxon>Shewanella</taxon>
    </lineage>
</organism>
<keyword id="KW-0413">Isomerase</keyword>
<keyword id="KW-0819">tRNA processing</keyword>
<feature type="chain" id="PRO_1000017174" description="tRNA pseudouridine synthase A">
    <location>
        <begin position="1"/>
        <end position="261"/>
    </location>
</feature>
<feature type="active site" description="Nucleophile" evidence="1">
    <location>
        <position position="51"/>
    </location>
</feature>
<feature type="binding site" evidence="1">
    <location>
        <position position="109"/>
    </location>
    <ligand>
        <name>substrate</name>
    </ligand>
</feature>
<reference key="1">
    <citation type="submission" date="2006-12" db="EMBL/GenBank/DDBJ databases">
        <title>Complete sequence of Shewanella sp. W3-18-1.</title>
        <authorList>
            <consortium name="US DOE Joint Genome Institute"/>
            <person name="Copeland A."/>
            <person name="Lucas S."/>
            <person name="Lapidus A."/>
            <person name="Barry K."/>
            <person name="Detter J.C."/>
            <person name="Glavina del Rio T."/>
            <person name="Hammon N."/>
            <person name="Israni S."/>
            <person name="Dalin E."/>
            <person name="Tice H."/>
            <person name="Pitluck S."/>
            <person name="Chain P."/>
            <person name="Malfatti S."/>
            <person name="Shin M."/>
            <person name="Vergez L."/>
            <person name="Schmutz J."/>
            <person name="Larimer F."/>
            <person name="Land M."/>
            <person name="Hauser L."/>
            <person name="Kyrpides N."/>
            <person name="Lykidis A."/>
            <person name="Tiedje J."/>
            <person name="Richardson P."/>
        </authorList>
    </citation>
    <scope>NUCLEOTIDE SEQUENCE [LARGE SCALE GENOMIC DNA]</scope>
    <source>
        <strain>W3-18-1</strain>
    </source>
</reference>
<sequence length="261" mass="29070">MRIALGIEYDGSGYFGWQRQAEVDSVQGQLERALSIVANEPIGLFCAGRTDAGVHATGQVVHFDTNAIRNEGAWTLGVNANLPDNIAVRWVKEVDDSFHARFSATARRYRYVIYNHSFRPGILRHGVSHYHGNIDADKMHQAAQVLLGEQDFTSFRAVQCQSKTPFRNVHSVNVTRQGMYVIVDIAANAFLHHMVRNIVGSLLEIGLGNQPLTWMGDLLALKDRNQAAATAKPHGLYLVDVTYPEQYQLPKLALGPLFMLD</sequence>
<name>TRUA_SHESW</name>
<comment type="function">
    <text evidence="1">Formation of pseudouridine at positions 38, 39 and 40 in the anticodon stem and loop of transfer RNAs.</text>
</comment>
<comment type="catalytic activity">
    <reaction evidence="1">
        <text>uridine(38/39/40) in tRNA = pseudouridine(38/39/40) in tRNA</text>
        <dbReference type="Rhea" id="RHEA:22376"/>
        <dbReference type="Rhea" id="RHEA-COMP:10085"/>
        <dbReference type="Rhea" id="RHEA-COMP:10087"/>
        <dbReference type="ChEBI" id="CHEBI:65314"/>
        <dbReference type="ChEBI" id="CHEBI:65315"/>
        <dbReference type="EC" id="5.4.99.12"/>
    </reaction>
</comment>
<comment type="subunit">
    <text evidence="1">Homodimer.</text>
</comment>
<comment type="similarity">
    <text evidence="1">Belongs to the tRNA pseudouridine synthase TruA family.</text>
</comment>
<proteinExistence type="inferred from homology"/>